<name>VE7_HPV10</name>
<dbReference type="EMBL" id="X74465">
    <property type="protein sequence ID" value="CAA52490.1"/>
    <property type="molecule type" value="Genomic_DNA"/>
</dbReference>
<dbReference type="PIR" id="S36533">
    <property type="entry name" value="S36533"/>
</dbReference>
<dbReference type="RefSeq" id="NP_041742.1">
    <property type="nucleotide sequence ID" value="NC_001576.1"/>
</dbReference>
<dbReference type="SMR" id="P36818"/>
<dbReference type="GeneID" id="1489376"/>
<dbReference type="KEGG" id="vg:1489376"/>
<dbReference type="OrthoDB" id="28045at10239"/>
<dbReference type="Proteomes" id="UP000009105">
    <property type="component" value="Genome"/>
</dbReference>
<dbReference type="GO" id="GO:0030430">
    <property type="term" value="C:host cell cytoplasm"/>
    <property type="evidence" value="ECO:0007669"/>
    <property type="project" value="UniProtKB-SubCell"/>
</dbReference>
<dbReference type="GO" id="GO:0042025">
    <property type="term" value="C:host cell nucleus"/>
    <property type="evidence" value="ECO:0007669"/>
    <property type="project" value="UniProtKB-SubCell"/>
</dbReference>
<dbReference type="GO" id="GO:0003677">
    <property type="term" value="F:DNA binding"/>
    <property type="evidence" value="ECO:0007669"/>
    <property type="project" value="UniProtKB-UniRule"/>
</dbReference>
<dbReference type="GO" id="GO:0003700">
    <property type="term" value="F:DNA-binding transcription factor activity"/>
    <property type="evidence" value="ECO:0007669"/>
    <property type="project" value="UniProtKB-UniRule"/>
</dbReference>
<dbReference type="GO" id="GO:0019904">
    <property type="term" value="F:protein domain specific binding"/>
    <property type="evidence" value="ECO:0007669"/>
    <property type="project" value="UniProtKB-UniRule"/>
</dbReference>
<dbReference type="GO" id="GO:0008270">
    <property type="term" value="F:zinc ion binding"/>
    <property type="evidence" value="ECO:0007669"/>
    <property type="project" value="UniProtKB-KW"/>
</dbReference>
<dbReference type="GO" id="GO:0006351">
    <property type="term" value="P:DNA-templated transcription"/>
    <property type="evidence" value="ECO:0007669"/>
    <property type="project" value="UniProtKB-UniRule"/>
</dbReference>
<dbReference type="GO" id="GO:0039645">
    <property type="term" value="P:symbiont-mediated perturbation of host cell cycle G1/S transition checkpoint"/>
    <property type="evidence" value="ECO:0007669"/>
    <property type="project" value="UniProtKB-UniRule"/>
</dbReference>
<dbReference type="GO" id="GO:0052170">
    <property type="term" value="P:symbiont-mediated suppression of host innate immune response"/>
    <property type="evidence" value="ECO:0007669"/>
    <property type="project" value="UniProtKB-KW"/>
</dbReference>
<dbReference type="GO" id="GO:0039502">
    <property type="term" value="P:symbiont-mediated suppression of host type I interferon-mediated signaling pathway"/>
    <property type="evidence" value="ECO:0007669"/>
    <property type="project" value="UniProtKB-UniRule"/>
</dbReference>
<dbReference type="Gene3D" id="3.30.160.330">
    <property type="match status" value="1"/>
</dbReference>
<dbReference type="HAMAP" id="MF_04004">
    <property type="entry name" value="PPV_E7"/>
    <property type="match status" value="1"/>
</dbReference>
<dbReference type="InterPro" id="IPR000148">
    <property type="entry name" value="Papilloma_E7"/>
</dbReference>
<dbReference type="Pfam" id="PF00527">
    <property type="entry name" value="E7"/>
    <property type="match status" value="1"/>
</dbReference>
<dbReference type="PIRSF" id="PIRSF003407">
    <property type="entry name" value="Papvi_E7"/>
    <property type="match status" value="1"/>
</dbReference>
<dbReference type="SUPFAM" id="SSF161234">
    <property type="entry name" value="E7 C-terminal domain-like"/>
    <property type="match status" value="1"/>
</dbReference>
<comment type="function">
    <text evidence="1">Plays a role in viral genome replication by driving entry of quiescent cells into the cell cycle. Stimulation of progression from G1 to S phase allows the virus to efficiently use the cellular DNA replicating machinery to achieve viral genome replication. E7 protein has both transforming and trans-activating activities. Induces the disassembly of the E2F1 transcription factor from RB1, with subsequent transcriptional activation of E2F1-regulated S-phase genes. Interferes with host histone deacetylation mediated by HDAC1 and HDAC2, leading to transcription activation. Also plays a role in the inhibition of both antiviral and antiproliferative functions of host interferon alpha. Interaction with host TMEM173/STING impairs the ability of TMEM173/STING to sense cytosolic DNA and promote the production of type I interferon (IFN-alpha and IFN-beta).</text>
</comment>
<comment type="subunit">
    <text evidence="1">Homodimer. Homooligomer. Interacts with host RB1; this interaction induces dissociation of RB1-E2F1 complex thereby disrupting RB1 activity. Interacts with host EP300; this interaction represses EP300 transcriptional activity. Interacts with protein E2; this interaction inhibits E7 oncogenic activity. Interacts with host TMEM173/STING; this interaction impairs the ability of TMEM173/STING to sense cytosolic DNA and promote the production of type I interferon (IFN-alpha and IFN-beta).</text>
</comment>
<comment type="subcellular location">
    <subcellularLocation>
        <location evidence="1">Host cytoplasm</location>
    </subcellularLocation>
    <subcellularLocation>
        <location evidence="1">Host nucleus</location>
    </subcellularLocation>
    <text evidence="1">Predominantly found in the host nucleus.</text>
</comment>
<comment type="domain">
    <text evidence="1">The E7 terminal domain is an intrinsically disordered domain, whose flexibility and conformational transitions confer target adaptability to the oncoprotein. It allows adaptation to a variety of protein targets and exposes the PEST degradation sequence that regulates its turnover in the cell.</text>
</comment>
<comment type="PTM">
    <text evidence="1">Highly phosphorylated.</text>
</comment>
<comment type="similarity">
    <text evidence="1">Belongs to the papillomaviridae E7 protein family.</text>
</comment>
<protein>
    <recommendedName>
        <fullName evidence="1">Protein E7</fullName>
    </recommendedName>
</protein>
<proteinExistence type="inferred from homology"/>
<organismHost>
    <name type="scientific">Homo sapiens</name>
    <name type="common">Human</name>
    <dbReference type="NCBI Taxonomy" id="9606"/>
</organismHost>
<keyword id="KW-0010">Activator</keyword>
<keyword id="KW-0238">DNA-binding</keyword>
<keyword id="KW-0244">Early protein</keyword>
<keyword id="KW-1078">G1/S host cell cycle checkpoint dysregulation by virus</keyword>
<keyword id="KW-1035">Host cytoplasm</keyword>
<keyword id="KW-1048">Host nucleus</keyword>
<keyword id="KW-0945">Host-virus interaction</keyword>
<keyword id="KW-1090">Inhibition of host innate immune response by virus</keyword>
<keyword id="KW-1114">Inhibition of host interferon signaling pathway by virus</keyword>
<keyword id="KW-0922">Interferon antiviral system evasion</keyword>
<keyword id="KW-0479">Metal-binding</keyword>
<keyword id="KW-1121">Modulation of host cell cycle by virus</keyword>
<keyword id="KW-0553">Oncogene</keyword>
<keyword id="KW-1185">Reference proteome</keyword>
<keyword id="KW-0804">Transcription</keyword>
<keyword id="KW-0805">Transcription regulation</keyword>
<keyword id="KW-0899">Viral immunoevasion</keyword>
<keyword id="KW-0862">Zinc</keyword>
<keyword id="KW-0863">Zinc-finger</keyword>
<gene>
    <name evidence="1" type="primary">E7</name>
</gene>
<accession>P36818</accession>
<sequence length="86" mass="9541">MHGPHPTVKDIELSLAPEDIPVCNVQLDEEDYTDAVEPAQQAYRVVTECTKCSLPLRLVVECSHADIRALEQLLLGTLKLVCPRCV</sequence>
<organism>
    <name type="scientific">Human papillomavirus type 10</name>
    <dbReference type="NCBI Taxonomy" id="333759"/>
    <lineage>
        <taxon>Viruses</taxon>
        <taxon>Monodnaviria</taxon>
        <taxon>Shotokuvirae</taxon>
        <taxon>Cossaviricota</taxon>
        <taxon>Papovaviricetes</taxon>
        <taxon>Zurhausenvirales</taxon>
        <taxon>Papillomaviridae</taxon>
        <taxon>Firstpapillomavirinae</taxon>
        <taxon>Alphapapillomavirus</taxon>
        <taxon>Alphapapillomavirus 2</taxon>
    </lineage>
</organism>
<feature type="chain" id="PRO_0000133409" description="Protein E7">
    <location>
        <begin position="1"/>
        <end position="86"/>
    </location>
</feature>
<feature type="zinc finger region" evidence="1">
    <location>
        <begin position="49"/>
        <end position="85"/>
    </location>
</feature>
<feature type="region of interest" description="E7 terminal domain" evidence="1">
    <location>
        <begin position="1"/>
        <end position="37"/>
    </location>
</feature>
<feature type="short sequence motif" description="Nuclear export signal" evidence="1">
    <location>
        <begin position="67"/>
        <end position="75"/>
    </location>
</feature>
<reference key="1">
    <citation type="journal article" date="1994" name="Curr. Top. Microbiol. Immunol.">
        <title>Primer-directed sequencing of human papillomavirus types.</title>
        <authorList>
            <person name="Delius H."/>
            <person name="Hofmann B."/>
        </authorList>
    </citation>
    <scope>NUCLEOTIDE SEQUENCE [GENOMIC DNA]</scope>
</reference>
<reference key="2">
    <citation type="journal article" date="2002" name="Rev. Med. Virol.">
        <title>Interactions of SV40 large T antigen and other viral proteins with retinoblastoma tumour suppressor.</title>
        <authorList>
            <person name="Lee C."/>
            <person name="Cho Y."/>
        </authorList>
    </citation>
    <scope>REVIEW</scope>
</reference>
<evidence type="ECO:0000255" key="1">
    <source>
        <dbReference type="HAMAP-Rule" id="MF_04004"/>
    </source>
</evidence>